<organism>
    <name type="scientific">Populus euphratica</name>
    <name type="common">Euphrates poplar</name>
    <dbReference type="NCBI Taxonomy" id="75702"/>
    <lineage>
        <taxon>Eukaryota</taxon>
        <taxon>Viridiplantae</taxon>
        <taxon>Streptophyta</taxon>
        <taxon>Embryophyta</taxon>
        <taxon>Tracheophyta</taxon>
        <taxon>Spermatophyta</taxon>
        <taxon>Magnoliopsida</taxon>
        <taxon>eudicotyledons</taxon>
        <taxon>Gunneridae</taxon>
        <taxon>Pentapetalae</taxon>
        <taxon>rosids</taxon>
        <taxon>fabids</taxon>
        <taxon>Malpighiales</taxon>
        <taxon>Salicaceae</taxon>
        <taxon>Saliceae</taxon>
        <taxon>Populus</taxon>
    </lineage>
</organism>
<keyword id="KW-0903">Direct protein sequencing</keyword>
<keyword id="KW-1185">Reference proteome</keyword>
<proteinExistence type="evidence at protein level"/>
<sequence>LAEQAERYEEMVEFMEK</sequence>
<evidence type="ECO:0000250" key="1">
    <source>
        <dbReference type="UniProtKB" id="Q01526"/>
    </source>
</evidence>
<evidence type="ECO:0000255" key="2"/>
<evidence type="ECO:0000269" key="3">
    <source ref="1"/>
</evidence>
<evidence type="ECO:0000303" key="4">
    <source ref="1"/>
</evidence>
<evidence type="ECO:0000305" key="5"/>
<feature type="chain" id="PRO_0000300507" description="14-3-3-like protein">
    <location>
        <begin position="1" status="less than"/>
        <end position="17" status="greater than"/>
    </location>
</feature>
<feature type="non-terminal residue" evidence="4">
    <location>
        <position position="1"/>
    </location>
</feature>
<feature type="non-terminal residue" evidence="4">
    <location>
        <position position="17"/>
    </location>
</feature>
<accession>P84972</accession>
<name>1433_POPEU</name>
<protein>
    <recommendedName>
        <fullName>14-3-3-like protein</fullName>
    </recommendedName>
</protein>
<reference evidence="5" key="1">
    <citation type="thesis" date="2006" institute="ICAT-FCUL" country="Portugal">
        <title>Molecular analysis of Populus euphratica Oliv. response to moderate heat stress.</title>
        <authorList>
            <person name="Ferreira S."/>
        </authorList>
    </citation>
    <scope>PROTEIN SEQUENCE</scope>
    <source>
        <tissue evidence="3">Leaf</tissue>
    </source>
</reference>
<dbReference type="Proteomes" id="UP000694918">
    <property type="component" value="Unplaced"/>
</dbReference>
<comment type="function">
    <text evidence="1">Is associated with a DNA binding complex to bind to the G box, a well-characterized cis-acting DNA regulatory element found in plant genes.</text>
</comment>
<comment type="similarity">
    <text evidence="2">Belongs to the 14-3-3 family.</text>
</comment>